<gene>
    <name evidence="1" type="primary">rpsS</name>
    <name type="ordered locus">PA0583</name>
</gene>
<reference key="1">
    <citation type="journal article" date="2008" name="J. Bacteriol.">
        <title>Comparative genome analysis of 'Candidatus Phytoplasma australiense' (subgroup tuf-Australia I; rp-A) and 'Ca. Phytoplasma asteris' strains OY-M and AY-WB.</title>
        <authorList>
            <person name="Tran-Nguyen L.T."/>
            <person name="Kube M."/>
            <person name="Schneider B."/>
            <person name="Reinhardt R."/>
            <person name="Gibb K.S."/>
        </authorList>
    </citation>
    <scope>NUCLEOTIDE SEQUENCE [LARGE SCALE GENOMIC DNA]</scope>
</reference>
<comment type="function">
    <text evidence="1">Protein S19 forms a complex with S13 that binds strongly to the 16S ribosomal RNA.</text>
</comment>
<comment type="similarity">
    <text evidence="1">Belongs to the universal ribosomal protein uS19 family.</text>
</comment>
<feature type="chain" id="PRO_1000128015" description="Small ribosomal subunit protein uS19">
    <location>
        <begin position="1"/>
        <end position="93"/>
    </location>
</feature>
<organism>
    <name type="scientific">Phytoplasma australiense</name>
    <dbReference type="NCBI Taxonomy" id="59748"/>
    <lineage>
        <taxon>Bacteria</taxon>
        <taxon>Bacillati</taxon>
        <taxon>Mycoplasmatota</taxon>
        <taxon>Mollicutes</taxon>
        <taxon>Acholeplasmatales</taxon>
        <taxon>Acholeplasmataceae</taxon>
        <taxon>Candidatus Phytoplasma</taxon>
        <taxon>16SrXII (Stolbur group)</taxon>
    </lineage>
</organism>
<evidence type="ECO:0000255" key="1">
    <source>
        <dbReference type="HAMAP-Rule" id="MF_00531"/>
    </source>
</evidence>
<evidence type="ECO:0000305" key="2"/>
<name>RS19_PHYAS</name>
<dbReference type="EMBL" id="AM422018">
    <property type="protein sequence ID" value="CAM11917.1"/>
    <property type="molecule type" value="Genomic_DNA"/>
</dbReference>
<dbReference type="SMR" id="B1VAE4"/>
<dbReference type="STRING" id="59748.PA0583"/>
<dbReference type="KEGG" id="pal:PA0583"/>
<dbReference type="eggNOG" id="COG0185">
    <property type="taxonomic scope" value="Bacteria"/>
</dbReference>
<dbReference type="Proteomes" id="UP000008323">
    <property type="component" value="Chromosome"/>
</dbReference>
<dbReference type="GO" id="GO:0005737">
    <property type="term" value="C:cytoplasm"/>
    <property type="evidence" value="ECO:0007669"/>
    <property type="project" value="UniProtKB-ARBA"/>
</dbReference>
<dbReference type="GO" id="GO:0015935">
    <property type="term" value="C:small ribosomal subunit"/>
    <property type="evidence" value="ECO:0007669"/>
    <property type="project" value="InterPro"/>
</dbReference>
<dbReference type="GO" id="GO:0019843">
    <property type="term" value="F:rRNA binding"/>
    <property type="evidence" value="ECO:0007669"/>
    <property type="project" value="UniProtKB-UniRule"/>
</dbReference>
<dbReference type="GO" id="GO:0003735">
    <property type="term" value="F:structural constituent of ribosome"/>
    <property type="evidence" value="ECO:0007669"/>
    <property type="project" value="InterPro"/>
</dbReference>
<dbReference type="GO" id="GO:0000028">
    <property type="term" value="P:ribosomal small subunit assembly"/>
    <property type="evidence" value="ECO:0007669"/>
    <property type="project" value="TreeGrafter"/>
</dbReference>
<dbReference type="GO" id="GO:0006412">
    <property type="term" value="P:translation"/>
    <property type="evidence" value="ECO:0007669"/>
    <property type="project" value="UniProtKB-UniRule"/>
</dbReference>
<dbReference type="FunFam" id="3.30.860.10:FF:000001">
    <property type="entry name" value="30S ribosomal protein S19"/>
    <property type="match status" value="1"/>
</dbReference>
<dbReference type="Gene3D" id="3.30.860.10">
    <property type="entry name" value="30s Ribosomal Protein S19, Chain A"/>
    <property type="match status" value="1"/>
</dbReference>
<dbReference type="HAMAP" id="MF_00531">
    <property type="entry name" value="Ribosomal_uS19"/>
    <property type="match status" value="1"/>
</dbReference>
<dbReference type="InterPro" id="IPR002222">
    <property type="entry name" value="Ribosomal_uS19"/>
</dbReference>
<dbReference type="InterPro" id="IPR005732">
    <property type="entry name" value="Ribosomal_uS19_bac-type"/>
</dbReference>
<dbReference type="InterPro" id="IPR020934">
    <property type="entry name" value="Ribosomal_uS19_CS"/>
</dbReference>
<dbReference type="InterPro" id="IPR023575">
    <property type="entry name" value="Ribosomal_uS19_SF"/>
</dbReference>
<dbReference type="NCBIfam" id="TIGR01050">
    <property type="entry name" value="rpsS_bact"/>
    <property type="match status" value="1"/>
</dbReference>
<dbReference type="PANTHER" id="PTHR11880">
    <property type="entry name" value="RIBOSOMAL PROTEIN S19P FAMILY MEMBER"/>
    <property type="match status" value="1"/>
</dbReference>
<dbReference type="PANTHER" id="PTHR11880:SF8">
    <property type="entry name" value="SMALL RIBOSOMAL SUBUNIT PROTEIN US19M"/>
    <property type="match status" value="1"/>
</dbReference>
<dbReference type="Pfam" id="PF00203">
    <property type="entry name" value="Ribosomal_S19"/>
    <property type="match status" value="1"/>
</dbReference>
<dbReference type="PIRSF" id="PIRSF002144">
    <property type="entry name" value="Ribosomal_S19"/>
    <property type="match status" value="1"/>
</dbReference>
<dbReference type="PRINTS" id="PR00975">
    <property type="entry name" value="RIBOSOMALS19"/>
</dbReference>
<dbReference type="SUPFAM" id="SSF54570">
    <property type="entry name" value="Ribosomal protein S19"/>
    <property type="match status" value="1"/>
</dbReference>
<dbReference type="PROSITE" id="PS00323">
    <property type="entry name" value="RIBOSOMAL_S19"/>
    <property type="match status" value="1"/>
</dbReference>
<accession>B1VAE4</accession>
<protein>
    <recommendedName>
        <fullName evidence="1">Small ribosomal subunit protein uS19</fullName>
    </recommendedName>
    <alternativeName>
        <fullName evidence="2">30S ribosomal protein S19</fullName>
    </alternativeName>
</protein>
<keyword id="KW-1185">Reference proteome</keyword>
<keyword id="KW-0687">Ribonucleoprotein</keyword>
<keyword id="KW-0689">Ribosomal protein</keyword>
<keyword id="KW-0694">RNA-binding</keyword>
<keyword id="KW-0699">rRNA-binding</keyword>
<proteinExistence type="inferred from homology"/>
<sequence length="93" mass="10836">MPRSLKKGPYVASHLLEKIEKQKNLKNKKVIQTWSRSSMITPVFVGHKIAVYNGREHIPIYITENMVGHKLGEFFSTRTYRGHNKKDKKGQKK</sequence>